<dbReference type="EC" id="1.5.1.5" evidence="1"/>
<dbReference type="EC" id="3.5.4.9" evidence="1"/>
<dbReference type="EMBL" id="CP000478">
    <property type="protein sequence ID" value="ABK18364.1"/>
    <property type="molecule type" value="Genomic_DNA"/>
</dbReference>
<dbReference type="RefSeq" id="WP_011699531.1">
    <property type="nucleotide sequence ID" value="NC_008554.1"/>
</dbReference>
<dbReference type="SMR" id="A0LLR2"/>
<dbReference type="FunCoup" id="A0LLR2">
    <property type="interactions" value="511"/>
</dbReference>
<dbReference type="STRING" id="335543.Sfum_2686"/>
<dbReference type="KEGG" id="sfu:Sfum_2686"/>
<dbReference type="eggNOG" id="COG0190">
    <property type="taxonomic scope" value="Bacteria"/>
</dbReference>
<dbReference type="HOGENOM" id="CLU_034045_2_1_7"/>
<dbReference type="InParanoid" id="A0LLR2"/>
<dbReference type="OrthoDB" id="9803580at2"/>
<dbReference type="UniPathway" id="UPA00193"/>
<dbReference type="Proteomes" id="UP000001784">
    <property type="component" value="Chromosome"/>
</dbReference>
<dbReference type="GO" id="GO:0005829">
    <property type="term" value="C:cytosol"/>
    <property type="evidence" value="ECO:0007669"/>
    <property type="project" value="TreeGrafter"/>
</dbReference>
<dbReference type="GO" id="GO:0004477">
    <property type="term" value="F:methenyltetrahydrofolate cyclohydrolase activity"/>
    <property type="evidence" value="ECO:0007669"/>
    <property type="project" value="UniProtKB-UniRule"/>
</dbReference>
<dbReference type="GO" id="GO:0004488">
    <property type="term" value="F:methylenetetrahydrofolate dehydrogenase (NADP+) activity"/>
    <property type="evidence" value="ECO:0007669"/>
    <property type="project" value="UniProtKB-UniRule"/>
</dbReference>
<dbReference type="GO" id="GO:0000105">
    <property type="term" value="P:L-histidine biosynthetic process"/>
    <property type="evidence" value="ECO:0007669"/>
    <property type="project" value="UniProtKB-KW"/>
</dbReference>
<dbReference type="GO" id="GO:0009086">
    <property type="term" value="P:methionine biosynthetic process"/>
    <property type="evidence" value="ECO:0007669"/>
    <property type="project" value="UniProtKB-KW"/>
</dbReference>
<dbReference type="GO" id="GO:0006164">
    <property type="term" value="P:purine nucleotide biosynthetic process"/>
    <property type="evidence" value="ECO:0007669"/>
    <property type="project" value="UniProtKB-KW"/>
</dbReference>
<dbReference type="GO" id="GO:0035999">
    <property type="term" value="P:tetrahydrofolate interconversion"/>
    <property type="evidence" value="ECO:0007669"/>
    <property type="project" value="UniProtKB-UniRule"/>
</dbReference>
<dbReference type="CDD" id="cd01080">
    <property type="entry name" value="NAD_bind_m-THF_DH_Cyclohyd"/>
    <property type="match status" value="1"/>
</dbReference>
<dbReference type="FunFam" id="3.40.50.720:FF:000006">
    <property type="entry name" value="Bifunctional protein FolD"/>
    <property type="match status" value="1"/>
</dbReference>
<dbReference type="FunFam" id="3.40.50.10860:FF:000005">
    <property type="entry name" value="C-1-tetrahydrofolate synthase, cytoplasmic, putative"/>
    <property type="match status" value="1"/>
</dbReference>
<dbReference type="Gene3D" id="3.40.50.10860">
    <property type="entry name" value="Leucine Dehydrogenase, chain A, domain 1"/>
    <property type="match status" value="1"/>
</dbReference>
<dbReference type="Gene3D" id="3.40.50.720">
    <property type="entry name" value="NAD(P)-binding Rossmann-like Domain"/>
    <property type="match status" value="1"/>
</dbReference>
<dbReference type="HAMAP" id="MF_01576">
    <property type="entry name" value="THF_DHG_CYH"/>
    <property type="match status" value="1"/>
</dbReference>
<dbReference type="InterPro" id="IPR046346">
    <property type="entry name" value="Aminoacid_DH-like_N_sf"/>
</dbReference>
<dbReference type="InterPro" id="IPR036291">
    <property type="entry name" value="NAD(P)-bd_dom_sf"/>
</dbReference>
<dbReference type="InterPro" id="IPR000672">
    <property type="entry name" value="THF_DH/CycHdrlase"/>
</dbReference>
<dbReference type="InterPro" id="IPR020630">
    <property type="entry name" value="THF_DH/CycHdrlase_cat_dom"/>
</dbReference>
<dbReference type="InterPro" id="IPR020867">
    <property type="entry name" value="THF_DH/CycHdrlase_CS"/>
</dbReference>
<dbReference type="InterPro" id="IPR020631">
    <property type="entry name" value="THF_DH/CycHdrlase_NAD-bd_dom"/>
</dbReference>
<dbReference type="PANTHER" id="PTHR48099:SF5">
    <property type="entry name" value="C-1-TETRAHYDROFOLATE SYNTHASE, CYTOPLASMIC"/>
    <property type="match status" value="1"/>
</dbReference>
<dbReference type="PANTHER" id="PTHR48099">
    <property type="entry name" value="C-1-TETRAHYDROFOLATE SYNTHASE, CYTOPLASMIC-RELATED"/>
    <property type="match status" value="1"/>
</dbReference>
<dbReference type="Pfam" id="PF00763">
    <property type="entry name" value="THF_DHG_CYH"/>
    <property type="match status" value="1"/>
</dbReference>
<dbReference type="Pfam" id="PF02882">
    <property type="entry name" value="THF_DHG_CYH_C"/>
    <property type="match status" value="1"/>
</dbReference>
<dbReference type="PRINTS" id="PR00085">
    <property type="entry name" value="THFDHDRGNASE"/>
</dbReference>
<dbReference type="SUPFAM" id="SSF53223">
    <property type="entry name" value="Aminoacid dehydrogenase-like, N-terminal domain"/>
    <property type="match status" value="1"/>
</dbReference>
<dbReference type="SUPFAM" id="SSF51735">
    <property type="entry name" value="NAD(P)-binding Rossmann-fold domains"/>
    <property type="match status" value="1"/>
</dbReference>
<dbReference type="PROSITE" id="PS00767">
    <property type="entry name" value="THF_DHG_CYH_2"/>
    <property type="match status" value="1"/>
</dbReference>
<evidence type="ECO:0000255" key="1">
    <source>
        <dbReference type="HAMAP-Rule" id="MF_01576"/>
    </source>
</evidence>
<organism>
    <name type="scientific">Syntrophobacter fumaroxidans (strain DSM 10017 / MPOB)</name>
    <dbReference type="NCBI Taxonomy" id="335543"/>
    <lineage>
        <taxon>Bacteria</taxon>
        <taxon>Pseudomonadati</taxon>
        <taxon>Thermodesulfobacteriota</taxon>
        <taxon>Syntrophobacteria</taxon>
        <taxon>Syntrophobacterales</taxon>
        <taxon>Syntrophobacteraceae</taxon>
        <taxon>Syntrophobacter</taxon>
    </lineage>
</organism>
<gene>
    <name evidence="1" type="primary">folD</name>
    <name type="ordered locus">Sfum_2686</name>
</gene>
<keyword id="KW-0028">Amino-acid biosynthesis</keyword>
<keyword id="KW-0368">Histidine biosynthesis</keyword>
<keyword id="KW-0378">Hydrolase</keyword>
<keyword id="KW-0486">Methionine biosynthesis</keyword>
<keyword id="KW-0511">Multifunctional enzyme</keyword>
<keyword id="KW-0521">NADP</keyword>
<keyword id="KW-0554">One-carbon metabolism</keyword>
<keyword id="KW-0560">Oxidoreductase</keyword>
<keyword id="KW-0658">Purine biosynthesis</keyword>
<keyword id="KW-1185">Reference proteome</keyword>
<reference key="1">
    <citation type="submission" date="2006-10" db="EMBL/GenBank/DDBJ databases">
        <title>Complete sequence of Syntrophobacter fumaroxidans MPOB.</title>
        <authorList>
            <consortium name="US DOE Joint Genome Institute"/>
            <person name="Copeland A."/>
            <person name="Lucas S."/>
            <person name="Lapidus A."/>
            <person name="Barry K."/>
            <person name="Detter J.C."/>
            <person name="Glavina del Rio T."/>
            <person name="Hammon N."/>
            <person name="Israni S."/>
            <person name="Pitluck S."/>
            <person name="Goltsman E.G."/>
            <person name="Martinez M."/>
            <person name="Schmutz J."/>
            <person name="Larimer F."/>
            <person name="Land M."/>
            <person name="Hauser L."/>
            <person name="Kyrpides N."/>
            <person name="Kim E."/>
            <person name="Boone D.R."/>
            <person name="Brockman F."/>
            <person name="Culley D."/>
            <person name="Ferry J."/>
            <person name="Gunsalus R."/>
            <person name="McInerney M.J."/>
            <person name="Morrison M."/>
            <person name="Plugge C."/>
            <person name="Rohlin L."/>
            <person name="Scholten J."/>
            <person name="Sieber J."/>
            <person name="Stams A.J.M."/>
            <person name="Worm P."/>
            <person name="Henstra A.M."/>
            <person name="Richardson P."/>
        </authorList>
    </citation>
    <scope>NUCLEOTIDE SEQUENCE [LARGE SCALE GENOMIC DNA]</scope>
    <source>
        <strain>DSM 10017 / MPOB</strain>
    </source>
</reference>
<protein>
    <recommendedName>
        <fullName evidence="1">Bifunctional protein FolD</fullName>
    </recommendedName>
    <domain>
        <recommendedName>
            <fullName evidence="1">Methylenetetrahydrofolate dehydrogenase</fullName>
            <ecNumber evidence="1">1.5.1.5</ecNumber>
        </recommendedName>
    </domain>
    <domain>
        <recommendedName>
            <fullName evidence="1">Methenyltetrahydrofolate cyclohydrolase</fullName>
            <ecNumber evidence="1">3.5.4.9</ecNumber>
        </recommendedName>
    </domain>
</protein>
<accession>A0LLR2</accession>
<name>FOLD_SYNFM</name>
<sequence length="295" mass="31480">MAAKLLKGAEVAKEIRAELKTEVEQLQSKHGVVPGLVTILVGENPASQSYVRAKQNTAHELGFHSVQDNQPADLEENRLLDLIDKYNKDPSIHGILVQLPLPKHINENRILLSIDPSKDVDAFHPVNVGKLMIGEPDYLPCTPAGIQELLVRSGTQVSGAEVTIVGRSNIVGKPIAMMLVQKANGANATITVCHTRTKDVASHTRRADILIVAAGVAEYVKGNMIKPGAVVIDVGVNEVGKTADGKRILKGDVAFDEAVEVASAITPVPGGVGPMTITMLMKNTVRACKVHNKIA</sequence>
<proteinExistence type="inferred from homology"/>
<feature type="chain" id="PRO_0000305891" description="Bifunctional protein FolD">
    <location>
        <begin position="1"/>
        <end position="295"/>
    </location>
</feature>
<feature type="binding site" evidence="1">
    <location>
        <begin position="166"/>
        <end position="168"/>
    </location>
    <ligand>
        <name>NADP(+)</name>
        <dbReference type="ChEBI" id="CHEBI:58349"/>
    </ligand>
</feature>
<feature type="binding site" evidence="1">
    <location>
        <position position="195"/>
    </location>
    <ligand>
        <name>NADP(+)</name>
        <dbReference type="ChEBI" id="CHEBI:58349"/>
    </ligand>
</feature>
<feature type="binding site" evidence="1">
    <location>
        <position position="236"/>
    </location>
    <ligand>
        <name>NADP(+)</name>
        <dbReference type="ChEBI" id="CHEBI:58349"/>
    </ligand>
</feature>
<comment type="function">
    <text evidence="1">Catalyzes the oxidation of 5,10-methylenetetrahydrofolate to 5,10-methenyltetrahydrofolate and then the hydrolysis of 5,10-methenyltetrahydrofolate to 10-formyltetrahydrofolate.</text>
</comment>
<comment type="catalytic activity">
    <reaction evidence="1">
        <text>(6R)-5,10-methylene-5,6,7,8-tetrahydrofolate + NADP(+) = (6R)-5,10-methenyltetrahydrofolate + NADPH</text>
        <dbReference type="Rhea" id="RHEA:22812"/>
        <dbReference type="ChEBI" id="CHEBI:15636"/>
        <dbReference type="ChEBI" id="CHEBI:57455"/>
        <dbReference type="ChEBI" id="CHEBI:57783"/>
        <dbReference type="ChEBI" id="CHEBI:58349"/>
        <dbReference type="EC" id="1.5.1.5"/>
    </reaction>
</comment>
<comment type="catalytic activity">
    <reaction evidence="1">
        <text>(6R)-5,10-methenyltetrahydrofolate + H2O = (6R)-10-formyltetrahydrofolate + H(+)</text>
        <dbReference type="Rhea" id="RHEA:23700"/>
        <dbReference type="ChEBI" id="CHEBI:15377"/>
        <dbReference type="ChEBI" id="CHEBI:15378"/>
        <dbReference type="ChEBI" id="CHEBI:57455"/>
        <dbReference type="ChEBI" id="CHEBI:195366"/>
        <dbReference type="EC" id="3.5.4.9"/>
    </reaction>
</comment>
<comment type="pathway">
    <text evidence="1">One-carbon metabolism; tetrahydrofolate interconversion.</text>
</comment>
<comment type="subunit">
    <text evidence="1">Homodimer.</text>
</comment>
<comment type="similarity">
    <text evidence="1">Belongs to the tetrahydrofolate dehydrogenase/cyclohydrolase family.</text>
</comment>